<evidence type="ECO:0000255" key="1">
    <source>
        <dbReference type="HAMAP-Rule" id="MF_03116"/>
    </source>
</evidence>
<organism>
    <name type="scientific">Komagataella phaffii (strain GS115 / ATCC 20864)</name>
    <name type="common">Yeast</name>
    <name type="synonym">Pichia pastoris</name>
    <dbReference type="NCBI Taxonomy" id="644223"/>
    <lineage>
        <taxon>Eukaryota</taxon>
        <taxon>Fungi</taxon>
        <taxon>Dikarya</taxon>
        <taxon>Ascomycota</taxon>
        <taxon>Saccharomycotina</taxon>
        <taxon>Pichiomycetes</taxon>
        <taxon>Pichiales</taxon>
        <taxon>Pichiaceae</taxon>
        <taxon>Komagataella</taxon>
    </lineage>
</organism>
<keyword id="KW-0028">Amino-acid biosynthesis</keyword>
<keyword id="KW-0963">Cytoplasm</keyword>
<keyword id="KW-0456">Lyase</keyword>
<keyword id="KW-0479">Metal-binding</keyword>
<keyword id="KW-0486">Methionine biosynthesis</keyword>
<keyword id="KW-1185">Reference proteome</keyword>
<keyword id="KW-0862">Zinc</keyword>
<protein>
    <recommendedName>
        <fullName evidence="1">Methylthioribulose-1-phosphate dehydratase</fullName>
        <shortName evidence="1">MTRu-1-P dehydratase</shortName>
        <ecNumber evidence="1">4.2.1.109</ecNumber>
    </recommendedName>
</protein>
<sequence length="240" mass="26874">MSSCFCSKSQETEKRGAVSEDQLVISDDSTHPANLICELCKVFYNNGWVTGTGGGISIREGSKIYIAPSGVQKERMVPDNMFVMDLESENYLRTPLTLKPSACTPLFLSAYKMRDAGACIHTHSQAAVMVTLLYDKVFEISSIEQIKAIPKVTEKGNLMYSDRLVIPIIENTEREEDLTDSLQQAIEEYPGTTAVLVRRHGIYVWGETVWKAKVYNEAIDYLLELALKMHQLGIPTVKQN</sequence>
<accession>C4R7D9</accession>
<reference key="1">
    <citation type="journal article" date="2009" name="Nat. Biotechnol.">
        <title>Genome sequence of the recombinant protein production host Pichia pastoris.</title>
        <authorList>
            <person name="De Schutter K."/>
            <person name="Lin Y.-C."/>
            <person name="Tiels P."/>
            <person name="Van Hecke A."/>
            <person name="Glinka S."/>
            <person name="Weber-Lehmann J."/>
            <person name="Rouze P."/>
            <person name="Van de Peer Y."/>
            <person name="Callewaert N."/>
        </authorList>
    </citation>
    <scope>NUCLEOTIDE SEQUENCE [LARGE SCALE GENOMIC DNA]</scope>
    <source>
        <strain>GS115 / ATCC 20864</strain>
    </source>
</reference>
<name>MTNB_KOMPG</name>
<dbReference type="EC" id="4.2.1.109" evidence="1"/>
<dbReference type="EMBL" id="FN392322">
    <property type="protein sequence ID" value="CAY71514.1"/>
    <property type="molecule type" value="Genomic_DNA"/>
</dbReference>
<dbReference type="RefSeq" id="XP_002493693.1">
    <property type="nucleotide sequence ID" value="XM_002493648.1"/>
</dbReference>
<dbReference type="SMR" id="C4R7D9"/>
<dbReference type="FunCoup" id="C4R7D9">
    <property type="interactions" value="247"/>
</dbReference>
<dbReference type="STRING" id="644223.C4R7D9"/>
<dbReference type="EnsemblFungi" id="CAY71514">
    <property type="protein sequence ID" value="CAY71514"/>
    <property type="gene ID" value="PAS_chr4_0280"/>
</dbReference>
<dbReference type="GeneID" id="8200949"/>
<dbReference type="KEGG" id="ppa:PAS_chr4_0280"/>
<dbReference type="eggNOG" id="KOG2631">
    <property type="taxonomic scope" value="Eukaryota"/>
</dbReference>
<dbReference type="HOGENOM" id="CLU_006033_4_0_1"/>
<dbReference type="InParanoid" id="C4R7D9"/>
<dbReference type="OMA" id="WFPGTSG"/>
<dbReference type="OrthoDB" id="191080at2759"/>
<dbReference type="UniPathway" id="UPA00904">
    <property type="reaction ID" value="UER00875"/>
</dbReference>
<dbReference type="Proteomes" id="UP000000314">
    <property type="component" value="Chromosome 4"/>
</dbReference>
<dbReference type="GO" id="GO:0005737">
    <property type="term" value="C:cytoplasm"/>
    <property type="evidence" value="ECO:0007669"/>
    <property type="project" value="UniProtKB-SubCell"/>
</dbReference>
<dbReference type="GO" id="GO:0046570">
    <property type="term" value="F:methylthioribulose 1-phosphate dehydratase activity"/>
    <property type="evidence" value="ECO:0007669"/>
    <property type="project" value="UniProtKB-UniRule"/>
</dbReference>
<dbReference type="GO" id="GO:0008270">
    <property type="term" value="F:zinc ion binding"/>
    <property type="evidence" value="ECO:0007669"/>
    <property type="project" value="UniProtKB-UniRule"/>
</dbReference>
<dbReference type="GO" id="GO:0019509">
    <property type="term" value="P:L-methionine salvage from methylthioadenosine"/>
    <property type="evidence" value="ECO:0007669"/>
    <property type="project" value="UniProtKB-UniRule"/>
</dbReference>
<dbReference type="FunFam" id="3.40.225.10:FF:000003">
    <property type="entry name" value="Methylthioribulose-1-phosphate dehydratase"/>
    <property type="match status" value="1"/>
</dbReference>
<dbReference type="Gene3D" id="3.40.225.10">
    <property type="entry name" value="Class II aldolase/adducin N-terminal domain"/>
    <property type="match status" value="1"/>
</dbReference>
<dbReference type="HAMAP" id="MF_03116">
    <property type="entry name" value="Salvage_MtnB_euk"/>
    <property type="match status" value="1"/>
</dbReference>
<dbReference type="InterPro" id="IPR001303">
    <property type="entry name" value="Aldolase_II/adducin_N"/>
</dbReference>
<dbReference type="InterPro" id="IPR036409">
    <property type="entry name" value="Aldolase_II/adducin_N_sf"/>
</dbReference>
<dbReference type="InterPro" id="IPR017714">
    <property type="entry name" value="MethylthioRu-1-P_deHdtase_MtnB"/>
</dbReference>
<dbReference type="InterPro" id="IPR027514">
    <property type="entry name" value="Salvage_MtnB_euk"/>
</dbReference>
<dbReference type="NCBIfam" id="TIGR03328">
    <property type="entry name" value="salvage_mtnB"/>
    <property type="match status" value="1"/>
</dbReference>
<dbReference type="PANTHER" id="PTHR10640">
    <property type="entry name" value="METHYLTHIORIBULOSE-1-PHOSPHATE DEHYDRATASE"/>
    <property type="match status" value="1"/>
</dbReference>
<dbReference type="PANTHER" id="PTHR10640:SF7">
    <property type="entry name" value="METHYLTHIORIBULOSE-1-PHOSPHATE DEHYDRATASE"/>
    <property type="match status" value="1"/>
</dbReference>
<dbReference type="Pfam" id="PF00596">
    <property type="entry name" value="Aldolase_II"/>
    <property type="match status" value="1"/>
</dbReference>
<dbReference type="SMART" id="SM01007">
    <property type="entry name" value="Aldolase_II"/>
    <property type="match status" value="1"/>
</dbReference>
<dbReference type="SUPFAM" id="SSF53639">
    <property type="entry name" value="AraD/HMP-PK domain-like"/>
    <property type="match status" value="1"/>
</dbReference>
<comment type="function">
    <text evidence="1">Catalyzes the dehydration of methylthioribulose-1-phosphate (MTRu-1-P) into 2,3-diketo-5-methylthiopentyl-1-phosphate (DK-MTP-1-P).</text>
</comment>
<comment type="catalytic activity">
    <reaction evidence="1">
        <text>5-(methylsulfanyl)-D-ribulose 1-phosphate = 5-methylsulfanyl-2,3-dioxopentyl phosphate + H2O</text>
        <dbReference type="Rhea" id="RHEA:15549"/>
        <dbReference type="ChEBI" id="CHEBI:15377"/>
        <dbReference type="ChEBI" id="CHEBI:58548"/>
        <dbReference type="ChEBI" id="CHEBI:58828"/>
        <dbReference type="EC" id="4.2.1.109"/>
    </reaction>
</comment>
<comment type="cofactor">
    <cofactor evidence="1">
        <name>Zn(2+)</name>
        <dbReference type="ChEBI" id="CHEBI:29105"/>
    </cofactor>
    <text evidence="1">Binds 1 zinc ion per subunit.</text>
</comment>
<comment type="pathway">
    <text evidence="1">Amino-acid biosynthesis; L-methionine biosynthesis via salvage pathway; L-methionine from S-methyl-5-thio-alpha-D-ribose 1-phosphate: step 2/6.</text>
</comment>
<comment type="subcellular location">
    <subcellularLocation>
        <location evidence="1">Cytoplasm</location>
    </subcellularLocation>
</comment>
<comment type="similarity">
    <text evidence="1">Belongs to the aldolase class II family. MtnB subfamily.</text>
</comment>
<proteinExistence type="inferred from homology"/>
<gene>
    <name evidence="1" type="primary">MDE1</name>
    <name type="ordered locus">PAS_chr4_0280</name>
</gene>
<feature type="chain" id="PRO_0000393841" description="Methylthioribulose-1-phosphate dehydratase">
    <location>
        <begin position="1"/>
        <end position="240"/>
    </location>
</feature>
<feature type="active site" description="Proton donor/acceptor" evidence="1">
    <location>
        <position position="144"/>
    </location>
</feature>
<feature type="binding site" evidence="1">
    <location>
        <position position="103"/>
    </location>
    <ligand>
        <name>substrate</name>
    </ligand>
</feature>
<feature type="binding site" evidence="1">
    <location>
        <position position="121"/>
    </location>
    <ligand>
        <name>Zn(2+)</name>
        <dbReference type="ChEBI" id="CHEBI:29105"/>
    </ligand>
</feature>
<feature type="binding site" evidence="1">
    <location>
        <position position="123"/>
    </location>
    <ligand>
        <name>Zn(2+)</name>
        <dbReference type="ChEBI" id="CHEBI:29105"/>
    </ligand>
</feature>
<feature type="binding site" evidence="1">
    <location>
        <position position="200"/>
    </location>
    <ligand>
        <name>Zn(2+)</name>
        <dbReference type="ChEBI" id="CHEBI:29105"/>
    </ligand>
</feature>